<gene>
    <name evidence="1" type="primary">mnmC</name>
    <name type="ordered locus">IL1022</name>
</gene>
<reference key="1">
    <citation type="journal article" date="2004" name="Proc. Natl. Acad. Sci. U.S.A.">
        <title>Genome sequence of the deep-sea gamma-proteobacterium Idiomarina loihiensis reveals amino acid fermentation as a source of carbon and energy.</title>
        <authorList>
            <person name="Hou S."/>
            <person name="Saw J.H."/>
            <person name="Lee K.S."/>
            <person name="Freitas T.A."/>
            <person name="Belisle C."/>
            <person name="Kawarabayasi Y."/>
            <person name="Donachie S.P."/>
            <person name="Pikina A."/>
            <person name="Galperin M.Y."/>
            <person name="Koonin E.V."/>
            <person name="Makarova K.S."/>
            <person name="Omelchenko M.V."/>
            <person name="Sorokin A."/>
            <person name="Wolf Y.I."/>
            <person name="Li Q.X."/>
            <person name="Keum Y.S."/>
            <person name="Campbell S."/>
            <person name="Denery J."/>
            <person name="Aizawa S."/>
            <person name="Shibata S."/>
            <person name="Malahoff A."/>
            <person name="Alam M."/>
        </authorList>
    </citation>
    <scope>NUCLEOTIDE SEQUENCE [LARGE SCALE GENOMIC DNA]</scope>
    <source>
        <strain>ATCC BAA-735 / DSM 15497 / L2-TR</strain>
    </source>
</reference>
<accession>Q5QUE0</accession>
<name>MNMC_IDILO</name>
<protein>
    <recommendedName>
        <fullName evidence="1">tRNA 5-methylaminomethyl-2-thiouridine biosynthesis bifunctional protein MnmC</fullName>
        <shortName evidence="1">tRNA mnm(5)s(2)U biosynthesis bifunctional protein</shortName>
    </recommendedName>
    <domain>
        <recommendedName>
            <fullName evidence="1">tRNA (mnm(5)s(2)U34)-methyltransferase</fullName>
            <ecNumber evidence="1">2.1.1.61</ecNumber>
        </recommendedName>
    </domain>
    <domain>
        <recommendedName>
            <fullName evidence="1">FAD-dependent cmnm(5)s(2)U34 oxidoreductase</fullName>
            <ecNumber evidence="1">1.5.-.-</ecNumber>
        </recommendedName>
    </domain>
</protein>
<dbReference type="EC" id="2.1.1.61" evidence="1"/>
<dbReference type="EC" id="1.5.-.-" evidence="1"/>
<dbReference type="EMBL" id="AE017340">
    <property type="protein sequence ID" value="AAV81862.1"/>
    <property type="molecule type" value="Genomic_DNA"/>
</dbReference>
<dbReference type="RefSeq" id="WP_011234273.1">
    <property type="nucleotide sequence ID" value="NC_006512.1"/>
</dbReference>
<dbReference type="SMR" id="Q5QUE0"/>
<dbReference type="STRING" id="283942.IL1022"/>
<dbReference type="GeneID" id="41336188"/>
<dbReference type="KEGG" id="ilo:IL1022"/>
<dbReference type="eggNOG" id="COG0665">
    <property type="taxonomic scope" value="Bacteria"/>
</dbReference>
<dbReference type="eggNOG" id="COG4121">
    <property type="taxonomic scope" value="Bacteria"/>
</dbReference>
<dbReference type="HOGENOM" id="CLU_022427_1_0_6"/>
<dbReference type="OrthoDB" id="9786494at2"/>
<dbReference type="Proteomes" id="UP000001171">
    <property type="component" value="Chromosome"/>
</dbReference>
<dbReference type="GO" id="GO:0005737">
    <property type="term" value="C:cytoplasm"/>
    <property type="evidence" value="ECO:0007669"/>
    <property type="project" value="UniProtKB-SubCell"/>
</dbReference>
<dbReference type="GO" id="GO:0050660">
    <property type="term" value="F:flavin adenine dinucleotide binding"/>
    <property type="evidence" value="ECO:0007669"/>
    <property type="project" value="UniProtKB-UniRule"/>
</dbReference>
<dbReference type="GO" id="GO:0016645">
    <property type="term" value="F:oxidoreductase activity, acting on the CH-NH group of donors"/>
    <property type="evidence" value="ECO:0007669"/>
    <property type="project" value="InterPro"/>
</dbReference>
<dbReference type="GO" id="GO:0004808">
    <property type="term" value="F:tRNA (5-methylaminomethyl-2-thiouridylate)(34)-methyltransferase activity"/>
    <property type="evidence" value="ECO:0007669"/>
    <property type="project" value="UniProtKB-EC"/>
</dbReference>
<dbReference type="GO" id="GO:0032259">
    <property type="term" value="P:methylation"/>
    <property type="evidence" value="ECO:0007669"/>
    <property type="project" value="UniProtKB-KW"/>
</dbReference>
<dbReference type="GO" id="GO:0002097">
    <property type="term" value="P:tRNA wobble base modification"/>
    <property type="evidence" value="ECO:0007669"/>
    <property type="project" value="UniProtKB-UniRule"/>
</dbReference>
<dbReference type="Gene3D" id="3.30.9.10">
    <property type="entry name" value="D-Amino Acid Oxidase, subunit A, domain 2"/>
    <property type="match status" value="1"/>
</dbReference>
<dbReference type="Gene3D" id="3.50.50.60">
    <property type="entry name" value="FAD/NAD(P)-binding domain"/>
    <property type="match status" value="1"/>
</dbReference>
<dbReference type="Gene3D" id="3.40.50.150">
    <property type="entry name" value="Vaccinia Virus protein VP39"/>
    <property type="match status" value="1"/>
</dbReference>
<dbReference type="HAMAP" id="MF_01102">
    <property type="entry name" value="MnmC"/>
    <property type="match status" value="1"/>
</dbReference>
<dbReference type="InterPro" id="IPR006076">
    <property type="entry name" value="FAD-dep_OxRdtase"/>
</dbReference>
<dbReference type="InterPro" id="IPR036188">
    <property type="entry name" value="FAD/NAD-bd_sf"/>
</dbReference>
<dbReference type="InterPro" id="IPR008471">
    <property type="entry name" value="MnmC-like_methylTransf"/>
</dbReference>
<dbReference type="InterPro" id="IPR029063">
    <property type="entry name" value="SAM-dependent_MTases_sf"/>
</dbReference>
<dbReference type="InterPro" id="IPR023032">
    <property type="entry name" value="tRNA_MAMT_biosynth_bifunc_MnmC"/>
</dbReference>
<dbReference type="InterPro" id="IPR047785">
    <property type="entry name" value="tRNA_MNMC2"/>
</dbReference>
<dbReference type="InterPro" id="IPR017610">
    <property type="entry name" value="tRNA_S-uridine_synth_MnmC_C"/>
</dbReference>
<dbReference type="NCBIfam" id="TIGR03197">
    <property type="entry name" value="MnmC_Cterm"/>
    <property type="match status" value="1"/>
</dbReference>
<dbReference type="NCBIfam" id="NF002481">
    <property type="entry name" value="PRK01747.1-2"/>
    <property type="match status" value="1"/>
</dbReference>
<dbReference type="NCBIfam" id="NF033855">
    <property type="entry name" value="tRNA_MNMC2"/>
    <property type="match status" value="1"/>
</dbReference>
<dbReference type="PANTHER" id="PTHR13847">
    <property type="entry name" value="SARCOSINE DEHYDROGENASE-RELATED"/>
    <property type="match status" value="1"/>
</dbReference>
<dbReference type="PANTHER" id="PTHR13847:SF283">
    <property type="entry name" value="TRNA 5-METHYLAMINOMETHYL-2-THIOURIDINE BIOSYNTHESIS BIFUNCTIONAL PROTEIN MNMC"/>
    <property type="match status" value="1"/>
</dbReference>
<dbReference type="Pfam" id="PF01266">
    <property type="entry name" value="DAO"/>
    <property type="match status" value="1"/>
</dbReference>
<dbReference type="Pfam" id="PF05430">
    <property type="entry name" value="Methyltransf_30"/>
    <property type="match status" value="1"/>
</dbReference>
<dbReference type="SUPFAM" id="SSF51905">
    <property type="entry name" value="FAD/NAD(P)-binding domain"/>
    <property type="match status" value="1"/>
</dbReference>
<proteinExistence type="inferred from homology"/>
<sequence>MNSNSSVQFNEQGVPVSTTFDDIYFSVESGVDESQYVFLAQNGLPRRWLSLPAHYSFTIAETGFGTGLNFLLTWKRFLEQAPANTRLHFVSFEKFPLSRQQLEQAYQLLEPIAEFSQSFLEHYPATDPGCHRIILSQGRVILDLWIGDLNELLPEWLPQAQKQIDAWFLDGFAPAKNPEMWQPTLFDAMKQTAHSGTTFATFTAAGSVKRALQQNGFEVQKVAGFGRKRDMLCGHYLSAEVCQKYYDRRDVTIIGGGISAACSALALKHRGVNVRVISAGSADGASGNPQGAVYPLLHAEYTPLSRFYWQAFSTATSFYRNFCDDHWFPVGVMQPAFNDDRARRYQRIADELYAPDTVRYLSQPEAEQEAGVSLAVPALLYPKAGWLRPAAVVKSLLETAQIELIEGEAKALEKTESGSWQISLKDGSLLAAERVLIATGHHINGLLPESVNPLPIQPVRGQVSLVQTTPLLSSLKTVLCFKGYLVPEDGNHHCVGASFNRDREDLEPTPEDDEENLKQLAENAKQPWAESLQLTSQRVSVRATSPDHQPVTGAVAENLYVITALGSRGFTSAPILAEVIACQLTGELTPLTQDALRRISVSRFKG</sequence>
<feature type="chain" id="PRO_0000347989" description="tRNA 5-methylaminomethyl-2-thiouridine biosynthesis bifunctional protein MnmC">
    <location>
        <begin position="1"/>
        <end position="606"/>
    </location>
</feature>
<feature type="region of interest" description="tRNA (mnm(5)s(2)U34)-methyltransferase">
    <location>
        <begin position="1"/>
        <end position="237"/>
    </location>
</feature>
<feature type="region of interest" description="FAD-dependent cmnm(5)s(2)U34 oxidoreductase">
    <location>
        <begin position="254"/>
        <end position="606"/>
    </location>
</feature>
<keyword id="KW-0963">Cytoplasm</keyword>
<keyword id="KW-0274">FAD</keyword>
<keyword id="KW-0285">Flavoprotein</keyword>
<keyword id="KW-0489">Methyltransferase</keyword>
<keyword id="KW-0511">Multifunctional enzyme</keyword>
<keyword id="KW-0560">Oxidoreductase</keyword>
<keyword id="KW-1185">Reference proteome</keyword>
<keyword id="KW-0949">S-adenosyl-L-methionine</keyword>
<keyword id="KW-0808">Transferase</keyword>
<keyword id="KW-0819">tRNA processing</keyword>
<organism>
    <name type="scientific">Idiomarina loihiensis (strain ATCC BAA-735 / DSM 15497 / L2-TR)</name>
    <dbReference type="NCBI Taxonomy" id="283942"/>
    <lineage>
        <taxon>Bacteria</taxon>
        <taxon>Pseudomonadati</taxon>
        <taxon>Pseudomonadota</taxon>
        <taxon>Gammaproteobacteria</taxon>
        <taxon>Alteromonadales</taxon>
        <taxon>Idiomarinaceae</taxon>
        <taxon>Idiomarina</taxon>
    </lineage>
</organism>
<comment type="function">
    <text evidence="1">Catalyzes the last two steps in the biosynthesis of 5-methylaminomethyl-2-thiouridine (mnm(5)s(2)U) at the wobble position (U34) in tRNA. Catalyzes the FAD-dependent demodification of cmnm(5)s(2)U34 to nm(5)s(2)U34, followed by the transfer of a methyl group from S-adenosyl-L-methionine to nm(5)s(2)U34, to form mnm(5)s(2)U34.</text>
</comment>
<comment type="catalytic activity">
    <reaction evidence="1">
        <text>5-aminomethyl-2-thiouridine(34) in tRNA + S-adenosyl-L-methionine = 5-methylaminomethyl-2-thiouridine(34) in tRNA + S-adenosyl-L-homocysteine + H(+)</text>
        <dbReference type="Rhea" id="RHEA:19569"/>
        <dbReference type="Rhea" id="RHEA-COMP:10195"/>
        <dbReference type="Rhea" id="RHEA-COMP:10197"/>
        <dbReference type="ChEBI" id="CHEBI:15378"/>
        <dbReference type="ChEBI" id="CHEBI:57856"/>
        <dbReference type="ChEBI" id="CHEBI:59789"/>
        <dbReference type="ChEBI" id="CHEBI:74454"/>
        <dbReference type="ChEBI" id="CHEBI:74455"/>
        <dbReference type="EC" id="2.1.1.61"/>
    </reaction>
</comment>
<comment type="cofactor">
    <cofactor evidence="1">
        <name>FAD</name>
        <dbReference type="ChEBI" id="CHEBI:57692"/>
    </cofactor>
</comment>
<comment type="subcellular location">
    <subcellularLocation>
        <location evidence="1">Cytoplasm</location>
    </subcellularLocation>
</comment>
<comment type="similarity">
    <text evidence="1">In the N-terminal section; belongs to the methyltransferase superfamily. tRNA (mnm(5)s(2)U34)-methyltransferase family.</text>
</comment>
<comment type="similarity">
    <text evidence="1">In the C-terminal section; belongs to the DAO family.</text>
</comment>
<evidence type="ECO:0000255" key="1">
    <source>
        <dbReference type="HAMAP-Rule" id="MF_01102"/>
    </source>
</evidence>